<name>SAPC_ECOL6</name>
<evidence type="ECO:0000250" key="1"/>
<evidence type="ECO:0000255" key="2"/>
<evidence type="ECO:0000255" key="3">
    <source>
        <dbReference type="PROSITE-ProRule" id="PRU00441"/>
    </source>
</evidence>
<evidence type="ECO:0000305" key="4"/>
<dbReference type="EMBL" id="AE014075">
    <property type="protein sequence ID" value="AAN80235.1"/>
    <property type="molecule type" value="Genomic_DNA"/>
</dbReference>
<dbReference type="RefSeq" id="WP_001146163.1">
    <property type="nucleotide sequence ID" value="NZ_CP051263.1"/>
</dbReference>
<dbReference type="SMR" id="P0AGH6"/>
<dbReference type="STRING" id="199310.c1769"/>
<dbReference type="GeneID" id="93775417"/>
<dbReference type="KEGG" id="ecc:c1769"/>
<dbReference type="eggNOG" id="COG4171">
    <property type="taxonomic scope" value="Bacteria"/>
</dbReference>
<dbReference type="HOGENOM" id="CLU_028518_1_1_6"/>
<dbReference type="BioCyc" id="ECOL199310:C1769-MONOMER"/>
<dbReference type="Proteomes" id="UP000001410">
    <property type="component" value="Chromosome"/>
</dbReference>
<dbReference type="GO" id="GO:0005886">
    <property type="term" value="C:plasma membrane"/>
    <property type="evidence" value="ECO:0007669"/>
    <property type="project" value="UniProtKB-SubCell"/>
</dbReference>
<dbReference type="GO" id="GO:0015833">
    <property type="term" value="P:peptide transport"/>
    <property type="evidence" value="ECO:0007669"/>
    <property type="project" value="UniProtKB-KW"/>
</dbReference>
<dbReference type="GO" id="GO:0015031">
    <property type="term" value="P:protein transport"/>
    <property type="evidence" value="ECO:0007669"/>
    <property type="project" value="UniProtKB-KW"/>
</dbReference>
<dbReference type="GO" id="GO:0055085">
    <property type="term" value="P:transmembrane transport"/>
    <property type="evidence" value="ECO:0007669"/>
    <property type="project" value="InterPro"/>
</dbReference>
<dbReference type="CDD" id="cd06261">
    <property type="entry name" value="TM_PBP2"/>
    <property type="match status" value="1"/>
</dbReference>
<dbReference type="FunFam" id="1.10.3720.10:FF:000019">
    <property type="entry name" value="Antimicrobial peptide ABC transporter permease SapC"/>
    <property type="match status" value="1"/>
</dbReference>
<dbReference type="Gene3D" id="1.10.3720.10">
    <property type="entry name" value="MetI-like"/>
    <property type="match status" value="1"/>
</dbReference>
<dbReference type="InterPro" id="IPR050366">
    <property type="entry name" value="BP-dependent_transpt_permease"/>
</dbReference>
<dbReference type="InterPro" id="IPR000515">
    <property type="entry name" value="MetI-like"/>
</dbReference>
<dbReference type="InterPro" id="IPR035906">
    <property type="entry name" value="MetI-like_sf"/>
</dbReference>
<dbReference type="InterPro" id="IPR025966">
    <property type="entry name" value="OppC_N"/>
</dbReference>
<dbReference type="NCBIfam" id="NF011691">
    <property type="entry name" value="PRK15111.1"/>
    <property type="match status" value="1"/>
</dbReference>
<dbReference type="PANTHER" id="PTHR43386">
    <property type="entry name" value="OLIGOPEPTIDE TRANSPORT SYSTEM PERMEASE PROTEIN APPC"/>
    <property type="match status" value="1"/>
</dbReference>
<dbReference type="PANTHER" id="PTHR43386:SF5">
    <property type="entry name" value="PUTRESCINE EXPORT SYSTEM PERMEASE PROTEIN SAPC"/>
    <property type="match status" value="1"/>
</dbReference>
<dbReference type="Pfam" id="PF00528">
    <property type="entry name" value="BPD_transp_1"/>
    <property type="match status" value="1"/>
</dbReference>
<dbReference type="Pfam" id="PF12911">
    <property type="entry name" value="OppC_N"/>
    <property type="match status" value="1"/>
</dbReference>
<dbReference type="SUPFAM" id="SSF161098">
    <property type="entry name" value="MetI-like"/>
    <property type="match status" value="1"/>
</dbReference>
<dbReference type="PROSITE" id="PS50928">
    <property type="entry name" value="ABC_TM1"/>
    <property type="match status" value="1"/>
</dbReference>
<accession>P0AGH6</accession>
<accession>Q47624</accession>
<sequence length="296" mass="31548">MPYDSVYSEKRPPGTLRTAWRKFYSDASAMVGLYGCAGLAVLCIFGGWFAPYGIDQQFLGYQLLPPSWSRYGEVSFFLGTDDLGRDVLSRLLSGAAPTVGGAFVVTLAATICGLVLGTFAGATHGLRSAVLNHILDTLLAIPSLLLAIIVVAFAGPSLSHAMFAVWLALLPRMVRSIYSMVHDELEKEYVIAARLDGASTLNILWFAVMPNITAGLVTEITRALSMAILDIAALGFLDLGAQLPSPEWGAMLGDALELIYVAPWTVMLPGAAIMISVLLVNLLGDGVRRAIIAGVE</sequence>
<comment type="function">
    <text evidence="1">Involved in a peptide intake transport system that plays a role in the resistance to antimicrobial peptides.</text>
</comment>
<comment type="subcellular location">
    <subcellularLocation>
        <location evidence="1">Cell inner membrane</location>
        <topology evidence="3">Multi-pass membrane protein</topology>
    </subcellularLocation>
</comment>
<comment type="similarity">
    <text evidence="4">Belongs to the binding-protein-dependent transport system permease family. OppBC subfamily.</text>
</comment>
<reference key="1">
    <citation type="journal article" date="2002" name="Proc. Natl. Acad. Sci. U.S.A.">
        <title>Extensive mosaic structure revealed by the complete genome sequence of uropathogenic Escherichia coli.</title>
        <authorList>
            <person name="Welch R.A."/>
            <person name="Burland V."/>
            <person name="Plunkett G. III"/>
            <person name="Redford P."/>
            <person name="Roesch P."/>
            <person name="Rasko D."/>
            <person name="Buckles E.L."/>
            <person name="Liou S.-R."/>
            <person name="Boutin A."/>
            <person name="Hackett J."/>
            <person name="Stroud D."/>
            <person name="Mayhew G.F."/>
            <person name="Rose D.J."/>
            <person name="Zhou S."/>
            <person name="Schwartz D.C."/>
            <person name="Perna N.T."/>
            <person name="Mobley H.L.T."/>
            <person name="Donnenberg M.S."/>
            <person name="Blattner F.R."/>
        </authorList>
    </citation>
    <scope>NUCLEOTIDE SEQUENCE [LARGE SCALE GENOMIC DNA]</scope>
    <source>
        <strain>CFT073 / ATCC 700928 / UPEC</strain>
    </source>
</reference>
<gene>
    <name type="primary">sapC</name>
    <name type="ordered locus">c1769</name>
</gene>
<keyword id="KW-0997">Cell inner membrane</keyword>
<keyword id="KW-1003">Cell membrane</keyword>
<keyword id="KW-0472">Membrane</keyword>
<keyword id="KW-0571">Peptide transport</keyword>
<keyword id="KW-0653">Protein transport</keyword>
<keyword id="KW-1185">Reference proteome</keyword>
<keyword id="KW-0812">Transmembrane</keyword>
<keyword id="KW-1133">Transmembrane helix</keyword>
<keyword id="KW-0813">Transport</keyword>
<feature type="chain" id="PRO_0000060164" description="Peptide transport system permease protein SapC">
    <location>
        <begin position="1"/>
        <end position="296"/>
    </location>
</feature>
<feature type="topological domain" description="Cytoplasmic" evidence="2">
    <location>
        <begin position="1"/>
        <end position="28"/>
    </location>
</feature>
<feature type="transmembrane region" description="Helical" evidence="3">
    <location>
        <begin position="29"/>
        <end position="49"/>
    </location>
</feature>
<feature type="topological domain" description="Periplasmic" evidence="2">
    <location>
        <begin position="50"/>
        <end position="98"/>
    </location>
</feature>
<feature type="transmembrane region" description="Helical" evidence="3">
    <location>
        <begin position="99"/>
        <end position="119"/>
    </location>
</feature>
<feature type="topological domain" description="Cytoplasmic" evidence="2">
    <location>
        <begin position="120"/>
        <end position="133"/>
    </location>
</feature>
<feature type="transmembrane region" description="Helical" evidence="3">
    <location>
        <begin position="134"/>
        <end position="154"/>
    </location>
</feature>
<feature type="topological domain" description="Periplasmic" evidence="2">
    <location>
        <begin position="155"/>
        <end position="196"/>
    </location>
</feature>
<feature type="transmembrane region" description="Helical" evidence="3">
    <location>
        <begin position="197"/>
        <end position="217"/>
    </location>
</feature>
<feature type="topological domain" description="Cytoplasmic" evidence="2">
    <location>
        <begin position="218"/>
        <end position="222"/>
    </location>
</feature>
<feature type="transmembrane region" description="Helical" evidence="3">
    <location>
        <begin position="223"/>
        <end position="243"/>
    </location>
</feature>
<feature type="topological domain" description="Periplasmic" evidence="2">
    <location>
        <begin position="244"/>
        <end position="257"/>
    </location>
</feature>
<feature type="transmembrane region" description="Helical" evidence="3">
    <location>
        <begin position="258"/>
        <end position="278"/>
    </location>
</feature>
<feature type="topological domain" description="Cytoplasmic" evidence="2">
    <location>
        <begin position="279"/>
        <end position="296"/>
    </location>
</feature>
<feature type="domain" description="ABC transmembrane type-1" evidence="3">
    <location>
        <begin position="99"/>
        <end position="284"/>
    </location>
</feature>
<proteinExistence type="inferred from homology"/>
<organism>
    <name type="scientific">Escherichia coli O6:H1 (strain CFT073 / ATCC 700928 / UPEC)</name>
    <dbReference type="NCBI Taxonomy" id="199310"/>
    <lineage>
        <taxon>Bacteria</taxon>
        <taxon>Pseudomonadati</taxon>
        <taxon>Pseudomonadota</taxon>
        <taxon>Gammaproteobacteria</taxon>
        <taxon>Enterobacterales</taxon>
        <taxon>Enterobacteriaceae</taxon>
        <taxon>Escherichia</taxon>
    </lineage>
</organism>
<protein>
    <recommendedName>
        <fullName>Peptide transport system permease protein SapC</fullName>
    </recommendedName>
</protein>